<accession>O68877</accession>
<accession>Q7DC58</accession>
<proteinExistence type="inferred from homology"/>
<reference key="1">
    <citation type="journal article" date="1996" name="Proc. Natl. Acad. Sci. U.S.A.">
        <title>Gene repression by the ferric uptake regulator in Pseudomonas aeruginosa: cycle selection of iron-regulated genes.</title>
        <authorList>
            <person name="Ochsner U.A."/>
            <person name="Vasil M.L."/>
        </authorList>
    </citation>
    <scope>NUCLEOTIDE SEQUENCE [GENOMIC DNA]</scope>
    <source>
        <strain>ATCC 15692 / DSM 22644 / CIP 104116 / JCM 14847 / LMG 12228 / 1C / PRS 101 / PAO1</strain>
    </source>
</reference>
<reference key="2">
    <citation type="journal article" date="2000" name="Nature">
        <title>Complete genome sequence of Pseudomonas aeruginosa PAO1, an opportunistic pathogen.</title>
        <authorList>
            <person name="Stover C.K."/>
            <person name="Pham X.-Q.T."/>
            <person name="Erwin A.L."/>
            <person name="Mizoguchi S.D."/>
            <person name="Warrener P."/>
            <person name="Hickey M.J."/>
            <person name="Brinkman F.S.L."/>
            <person name="Hufnagle W.O."/>
            <person name="Kowalik D.J."/>
            <person name="Lagrou M."/>
            <person name="Garber R.L."/>
            <person name="Goltry L."/>
            <person name="Tolentino E."/>
            <person name="Westbrock-Wadman S."/>
            <person name="Yuan Y."/>
            <person name="Brody L.L."/>
            <person name="Coulter S.N."/>
            <person name="Folger K.R."/>
            <person name="Kas A."/>
            <person name="Larbig K."/>
            <person name="Lim R.M."/>
            <person name="Smith K.A."/>
            <person name="Spencer D.H."/>
            <person name="Wong G.K.-S."/>
            <person name="Wu Z."/>
            <person name="Paulsen I.T."/>
            <person name="Reizer J."/>
            <person name="Saier M.H. Jr."/>
            <person name="Hancock R.E.W."/>
            <person name="Lory S."/>
            <person name="Olson M.V."/>
        </authorList>
    </citation>
    <scope>NUCLEOTIDE SEQUENCE [LARGE SCALE GENOMIC DNA]</scope>
    <source>
        <strain>ATCC 15692 / DSM 22644 / CIP 104116 / JCM 14847 / LMG 12228 / 1C / PRS 101 / PAO1</strain>
    </source>
</reference>
<sequence length="255" mass="27525">MLRVENLSIRRGGKTVLEGLELELRPGEMLGVLGPNGAGKSTLLGALCGELEPAEGLVLLDERGLDDWPGVARAQRLAVLPQSSSLGFAFPVEAVVGFGRLPHSSGRERDVQIVAEALAAADASHLAGRSYLALSGGERQRVHLARVLAQLWPGEPGQVLLLDEPTSALDPLHQHTTLQAVHDFARRGASVLVILHDLNLAARYCDRLLLLQNGRPHLLGTPEEVLRPEPLRAVFGLEVLVQRHPERGHPLIVAR</sequence>
<comment type="function">
    <text evidence="1">Part of the ABC transporter complex HmuTUV involved in hemin import. Responsible for energy coupling to the transport system.</text>
</comment>
<comment type="subunit">
    <text evidence="1">The complex is composed of two ATP-binding proteins (HmuV), two transmembrane proteins (HmuU) and a solute-binding protein (HmuT).</text>
</comment>
<comment type="subcellular location">
    <subcellularLocation>
        <location evidence="1">Cell inner membrane</location>
        <topology evidence="1">Peripheral membrane protein</topology>
    </subcellularLocation>
</comment>
<comment type="similarity">
    <text evidence="1">Belongs to the ABC transporter superfamily. Heme (hemin) importer (TC 3.A.1.14.5) family.</text>
</comment>
<name>HMUV_PSEAE</name>
<dbReference type="EC" id="7.6.2.-" evidence="1"/>
<dbReference type="EMBL" id="AF055999">
    <property type="protein sequence ID" value="AAC13285.1"/>
    <property type="molecule type" value="Genomic_DNA"/>
</dbReference>
<dbReference type="EMBL" id="AE004091">
    <property type="protein sequence ID" value="AAG08092.1"/>
    <property type="molecule type" value="Genomic_DNA"/>
</dbReference>
<dbReference type="PIR" id="F83058">
    <property type="entry name" value="F83058"/>
</dbReference>
<dbReference type="RefSeq" id="NP_253394.1">
    <property type="nucleotide sequence ID" value="NC_002516.2"/>
</dbReference>
<dbReference type="RefSeq" id="WP_003095098.1">
    <property type="nucleotide sequence ID" value="NZ_QZGE01000018.1"/>
</dbReference>
<dbReference type="SMR" id="O68877"/>
<dbReference type="STRING" id="208964.PA4706"/>
<dbReference type="TCDB" id="3.A.1.14.21">
    <property type="family name" value="the atp-binding cassette (abc) superfamily"/>
</dbReference>
<dbReference type="PaxDb" id="208964-PA4706"/>
<dbReference type="GeneID" id="881536"/>
<dbReference type="KEGG" id="pae:PA4706"/>
<dbReference type="PATRIC" id="fig|208964.12.peg.4930"/>
<dbReference type="PseudoCAP" id="PA4706"/>
<dbReference type="HOGENOM" id="CLU_000604_1_11_6"/>
<dbReference type="InParanoid" id="O68877"/>
<dbReference type="OrthoDB" id="5292475at2"/>
<dbReference type="PhylomeDB" id="O68877"/>
<dbReference type="BioCyc" id="PAER208964:G1FZ6-4812-MONOMER"/>
<dbReference type="Proteomes" id="UP000002438">
    <property type="component" value="Chromosome"/>
</dbReference>
<dbReference type="GO" id="GO:0005886">
    <property type="term" value="C:plasma membrane"/>
    <property type="evidence" value="ECO:0007669"/>
    <property type="project" value="UniProtKB-SubCell"/>
</dbReference>
<dbReference type="GO" id="GO:0005524">
    <property type="term" value="F:ATP binding"/>
    <property type="evidence" value="ECO:0007669"/>
    <property type="project" value="UniProtKB-KW"/>
</dbReference>
<dbReference type="GO" id="GO:0016887">
    <property type="term" value="F:ATP hydrolysis activity"/>
    <property type="evidence" value="ECO:0007669"/>
    <property type="project" value="InterPro"/>
</dbReference>
<dbReference type="CDD" id="cd03214">
    <property type="entry name" value="ABC_Iron-Siderophores_B12_Hemin"/>
    <property type="match status" value="1"/>
</dbReference>
<dbReference type="Gene3D" id="3.40.50.300">
    <property type="entry name" value="P-loop containing nucleotide triphosphate hydrolases"/>
    <property type="match status" value="1"/>
</dbReference>
<dbReference type="InterPro" id="IPR003593">
    <property type="entry name" value="AAA+_ATPase"/>
</dbReference>
<dbReference type="InterPro" id="IPR003439">
    <property type="entry name" value="ABC_transporter-like_ATP-bd"/>
</dbReference>
<dbReference type="InterPro" id="IPR027417">
    <property type="entry name" value="P-loop_NTPase"/>
</dbReference>
<dbReference type="NCBIfam" id="NF010068">
    <property type="entry name" value="PRK13548.1"/>
    <property type="match status" value="1"/>
</dbReference>
<dbReference type="PANTHER" id="PTHR42794">
    <property type="entry name" value="HEMIN IMPORT ATP-BINDING PROTEIN HMUV"/>
    <property type="match status" value="1"/>
</dbReference>
<dbReference type="PANTHER" id="PTHR42794:SF1">
    <property type="entry name" value="HEMIN IMPORT ATP-BINDING PROTEIN HMUV"/>
    <property type="match status" value="1"/>
</dbReference>
<dbReference type="Pfam" id="PF00005">
    <property type="entry name" value="ABC_tran"/>
    <property type="match status" value="1"/>
</dbReference>
<dbReference type="SMART" id="SM00382">
    <property type="entry name" value="AAA"/>
    <property type="match status" value="1"/>
</dbReference>
<dbReference type="SUPFAM" id="SSF52540">
    <property type="entry name" value="P-loop containing nucleoside triphosphate hydrolases"/>
    <property type="match status" value="1"/>
</dbReference>
<dbReference type="PROSITE" id="PS50893">
    <property type="entry name" value="ABC_TRANSPORTER_2"/>
    <property type="match status" value="1"/>
</dbReference>
<dbReference type="PROSITE" id="PS51261">
    <property type="entry name" value="HMUV"/>
    <property type="match status" value="1"/>
</dbReference>
<organism>
    <name type="scientific">Pseudomonas aeruginosa (strain ATCC 15692 / DSM 22644 / CIP 104116 / JCM 14847 / LMG 12228 / 1C / PRS 101 / PAO1)</name>
    <dbReference type="NCBI Taxonomy" id="208964"/>
    <lineage>
        <taxon>Bacteria</taxon>
        <taxon>Pseudomonadati</taxon>
        <taxon>Pseudomonadota</taxon>
        <taxon>Gammaproteobacteria</taxon>
        <taxon>Pseudomonadales</taxon>
        <taxon>Pseudomonadaceae</taxon>
        <taxon>Pseudomonas</taxon>
    </lineage>
</organism>
<evidence type="ECO:0000255" key="1">
    <source>
        <dbReference type="HAMAP-Rule" id="MF_01718"/>
    </source>
</evidence>
<protein>
    <recommendedName>
        <fullName evidence="1">Hemin import ATP-binding protein HmuV</fullName>
        <ecNumber evidence="1">7.6.2.-</ecNumber>
    </recommendedName>
</protein>
<feature type="chain" id="PRO_0000269609" description="Hemin import ATP-binding protein HmuV">
    <location>
        <begin position="1"/>
        <end position="255"/>
    </location>
</feature>
<feature type="domain" description="ABC transporter" evidence="1">
    <location>
        <begin position="2"/>
        <end position="238"/>
    </location>
</feature>
<feature type="binding site" evidence="1">
    <location>
        <begin position="34"/>
        <end position="41"/>
    </location>
    <ligand>
        <name>ATP</name>
        <dbReference type="ChEBI" id="CHEBI:30616"/>
    </ligand>
</feature>
<keyword id="KW-0067">ATP-binding</keyword>
<keyword id="KW-0997">Cell inner membrane</keyword>
<keyword id="KW-1003">Cell membrane</keyword>
<keyword id="KW-0472">Membrane</keyword>
<keyword id="KW-0547">Nucleotide-binding</keyword>
<keyword id="KW-1185">Reference proteome</keyword>
<keyword id="KW-1278">Translocase</keyword>
<keyword id="KW-0813">Transport</keyword>
<gene>
    <name evidence="1" type="primary">hmuV</name>
    <name type="synonym">phuV</name>
    <name type="ordered locus">PA4706</name>
</gene>